<keyword id="KW-0067">ATP-binding</keyword>
<keyword id="KW-0511">Multifunctional enzyme</keyword>
<keyword id="KW-0547">Nucleotide-binding</keyword>
<keyword id="KW-0548">Nucleotidyltransferase</keyword>
<keyword id="KW-0808">Transferase</keyword>
<accession>O53080</accession>
<sequence length="467" mass="52012">MDYFEGGERLNLMQVLDNREWREKYQKQLMASFPTAVITSVKLNLPGPIKTSPKLQSVFQIIINDLNPVFKDLQIIKEASFVDQITGPDIFFVTSGCLKLVKQIMITFEESHLLGRLLDLDVMCQNADKQLSREELGFAPRKCLLCGKDAKTCIKEGNHSLAEGYSQINKMLHNFEKSKMIVPQMTQSQVVNAALTGMLYEVSLAPKPGLVDPSSNGAHKDMTVFTFIDSSLALQPYLNEAYRIGNQFKGTDLPRMFSLLRNAGIRAEKDMFAATNGVNTHKGAVFSLGIMVTAVAYATQKGITNLLTIQKVISDMTQDLVKNDLGKNNLRHSQNQQTAGERQFIKYKIPGVRGEAEKGFPIVMNLALPFLCEQQGNLNQRLLNTLMKIAGNIDDTNLIKRAGNATISKDMQHWSVTFFQIGGSYTPEGLKFLNDLDQMFIKRNLSMGGAADNLILTIFLARLVGSL</sequence>
<name>CITXG_LEUMC</name>
<organism>
    <name type="scientific">Leuconostoc mesenteroides subsp. cremoris</name>
    <dbReference type="NCBI Taxonomy" id="33965"/>
    <lineage>
        <taxon>Bacteria</taxon>
        <taxon>Bacillati</taxon>
        <taxon>Bacillota</taxon>
        <taxon>Bacilli</taxon>
        <taxon>Lactobacillales</taxon>
        <taxon>Lactobacillaceae</taxon>
        <taxon>Leuconostoc</taxon>
    </lineage>
</organism>
<protein>
    <recommendedName>
        <fullName>Protein CitXG</fullName>
    </recommendedName>
    <domain>
        <recommendedName>
            <fullName>Apo-citrate lyase phosphoribosyl-dephospho-CoA transferase</fullName>
            <ecNumber>2.7.7.61</ecNumber>
        </recommendedName>
        <alternativeName>
            <fullName>Apo-ACP nucleodityltransferase</fullName>
        </alternativeName>
        <alternativeName>
            <fullName>Holo-ACP synthase</fullName>
        </alternativeName>
        <alternativeName>
            <fullName>Holo-citrate lyase synthase</fullName>
        </alternativeName>
    </domain>
    <domain>
        <recommendedName>
            <fullName>2-(5''-triphosphoribosyl)-3'-dephosphocoenzyme-A synthase</fullName>
            <shortName>2-(5''-triphosphoribosyl)-3'-dephospho-CoA synthase</shortName>
            <ecNumber>2.4.2.52</ecNumber>
        </recommendedName>
    </domain>
</protein>
<evidence type="ECO:0000250" key="1"/>
<evidence type="ECO:0000305" key="2"/>
<gene>
    <name type="primary">citXG</name>
    <name type="synonym">citG</name>
</gene>
<dbReference type="EC" id="2.7.7.61"/>
<dbReference type="EC" id="2.4.2.52"/>
<dbReference type="EMBL" id="Y10621">
    <property type="protein sequence ID" value="CAA71634.1"/>
    <property type="molecule type" value="Genomic_DNA"/>
</dbReference>
<dbReference type="SMR" id="O53080"/>
<dbReference type="GO" id="GO:0005524">
    <property type="term" value="F:ATP binding"/>
    <property type="evidence" value="ECO:0007669"/>
    <property type="project" value="UniProtKB-KW"/>
</dbReference>
<dbReference type="GO" id="GO:0050519">
    <property type="term" value="F:holo-citrate lyase synthase activity"/>
    <property type="evidence" value="ECO:0007669"/>
    <property type="project" value="UniProtKB-UniRule"/>
</dbReference>
<dbReference type="GO" id="GO:0046917">
    <property type="term" value="F:triphosphoribosyl-dephospho-CoA synthase activity"/>
    <property type="evidence" value="ECO:0007669"/>
    <property type="project" value="UniProtKB-UniRule"/>
</dbReference>
<dbReference type="GO" id="GO:0051191">
    <property type="term" value="P:prosthetic group biosynthetic process"/>
    <property type="evidence" value="ECO:0007669"/>
    <property type="project" value="InterPro"/>
</dbReference>
<dbReference type="Gene3D" id="1.10.4200.10">
    <property type="entry name" value="Triphosphoribosyl-dephospho-CoA protein"/>
    <property type="match status" value="1"/>
</dbReference>
<dbReference type="HAMAP" id="MF_00397">
    <property type="entry name" value="CitG"/>
    <property type="match status" value="1"/>
</dbReference>
<dbReference type="HAMAP" id="MF_00398">
    <property type="entry name" value="CitX"/>
    <property type="match status" value="1"/>
</dbReference>
<dbReference type="InterPro" id="IPR002736">
    <property type="entry name" value="CitG"/>
</dbReference>
<dbReference type="InterPro" id="IPR005551">
    <property type="entry name" value="CitX"/>
</dbReference>
<dbReference type="InterPro" id="IPR017551">
    <property type="entry name" value="TriPribosyl-deP-CoA_syn_CitG"/>
</dbReference>
<dbReference type="NCBIfam" id="TIGR03125">
    <property type="entry name" value="citrate_citG"/>
    <property type="match status" value="1"/>
</dbReference>
<dbReference type="NCBIfam" id="TIGR03124">
    <property type="entry name" value="citrate_citX"/>
    <property type="match status" value="1"/>
</dbReference>
<dbReference type="NCBIfam" id="NF002315">
    <property type="entry name" value="PRK01237.1"/>
    <property type="match status" value="1"/>
</dbReference>
<dbReference type="PANTHER" id="PTHR30201:SF2">
    <property type="entry name" value="2-(5''-TRIPHOSPHORIBOSYL)-3'-DEPHOSPHOCOENZYME-A SYNTHASE"/>
    <property type="match status" value="1"/>
</dbReference>
<dbReference type="PANTHER" id="PTHR30201">
    <property type="entry name" value="TRIPHOSPHORIBOSYL-DEPHOSPHO-COA SYNTHASE"/>
    <property type="match status" value="1"/>
</dbReference>
<dbReference type="Pfam" id="PF01874">
    <property type="entry name" value="CitG"/>
    <property type="match status" value="1"/>
</dbReference>
<dbReference type="Pfam" id="PF03802">
    <property type="entry name" value="CitX"/>
    <property type="match status" value="1"/>
</dbReference>
<reference key="1">
    <citation type="journal article" date="1998" name="J. Bacteriol.">
        <title>Purification of Leuconostoc mesenteroides citrate lyase and cloning and characterization of the citCDEFG gene cluster.</title>
        <authorList>
            <person name="Bekal S."/>
            <person name="van Beeumen J."/>
            <person name="Samyn B."/>
            <person name="Garmyn D."/>
            <person name="Henini S."/>
            <person name="Divies C."/>
            <person name="Prevost H."/>
        </authorList>
    </citation>
    <scope>NUCLEOTIDE SEQUENCE [GENOMIC DNA]</scope>
    <source>
        <strain>195</strain>
    </source>
</reference>
<comment type="function">
    <text evidence="1">Bifunctional enzyme that catalyzes formation of 2-(5''-triphosphoribosyl)-3'-dephosphocoenzyme-A, and then the transfer of this prosthetic group precursor to the apo-acyl carrier protein (gamma chain) of the citrate lyase to yield the holo-acyl carrier protein.</text>
</comment>
<comment type="catalytic activity">
    <reaction>
        <text>apo-[citrate lyase ACP] + 2'-(5''-triphospho-alpha-D-ribosyl)-3'-dephospho-CoA = holo-[citrate lyase ACP] + diphosphate</text>
        <dbReference type="Rhea" id="RHEA:16333"/>
        <dbReference type="Rhea" id="RHEA-COMP:10157"/>
        <dbReference type="Rhea" id="RHEA-COMP:10158"/>
        <dbReference type="ChEBI" id="CHEBI:29999"/>
        <dbReference type="ChEBI" id="CHEBI:33019"/>
        <dbReference type="ChEBI" id="CHEBI:61378"/>
        <dbReference type="ChEBI" id="CHEBI:82683"/>
        <dbReference type="EC" id="2.7.7.61"/>
    </reaction>
</comment>
<comment type="catalytic activity">
    <reaction>
        <text>3'-dephospho-CoA + ATP = 2'-(5''-triphospho-alpha-D-ribosyl)-3'-dephospho-CoA + adenine</text>
        <dbReference type="Rhea" id="RHEA:15117"/>
        <dbReference type="ChEBI" id="CHEBI:16708"/>
        <dbReference type="ChEBI" id="CHEBI:30616"/>
        <dbReference type="ChEBI" id="CHEBI:57328"/>
        <dbReference type="ChEBI" id="CHEBI:61378"/>
        <dbReference type="EC" id="2.4.2.52"/>
    </reaction>
</comment>
<comment type="similarity">
    <text evidence="2">In the N-terminal section; belongs to the CitX family.</text>
</comment>
<comment type="similarity">
    <text evidence="2">In the C-terminal section; belongs to the CitG/MdcB family.</text>
</comment>
<feature type="chain" id="PRO_0000214683" description="Protein CitXG">
    <location>
        <begin position="1"/>
        <end position="467"/>
    </location>
</feature>
<feature type="region of interest" description="Apo-citrate lyase phosphoribosyl-dephospho-CoA transferase">
    <location>
        <begin position="1"/>
        <end position="178"/>
    </location>
</feature>
<feature type="region of interest" description="2-(5''-triphosphoribosyl)-3'-dephosphocoenzyme-A synthase">
    <location>
        <begin position="179"/>
        <end position="467"/>
    </location>
</feature>
<proteinExistence type="inferred from homology"/>